<sequence length="243" mass="26543">MRTRIIVNGANGKMGILACETLENHEQFEIVAKLSRQDNLGQSILDTKAQIVVDLTRADCVYENSLTIINHGARPVIGTSGLVETQIDELTKLCEIKQIGGIIAPNFSLGAILMMILATKASEYFSEVEIIEGHHQQKLDAPSGTALKTAEMIAAARKKPKNKLPLKELTPGARGGSHHDINIHSLRLPGLLARQEVLFGNIGETLSITHNSIDRRCFMPGIVLACQKVLNLNNLVYGLEHLL</sequence>
<name>DAPB_LEGPH</name>
<gene>
    <name evidence="1" type="primary">dapB</name>
    <name type="ordered locus">lpg0131</name>
</gene>
<proteinExistence type="inferred from homology"/>
<reference key="1">
    <citation type="journal article" date="2004" name="Science">
        <title>The genomic sequence of the accidental pathogen Legionella pneumophila.</title>
        <authorList>
            <person name="Chien M."/>
            <person name="Morozova I."/>
            <person name="Shi S."/>
            <person name="Sheng H."/>
            <person name="Chen J."/>
            <person name="Gomez S.M."/>
            <person name="Asamani G."/>
            <person name="Hill K."/>
            <person name="Nuara J."/>
            <person name="Feder M."/>
            <person name="Rineer J."/>
            <person name="Greenberg J.J."/>
            <person name="Steshenko V."/>
            <person name="Park S.H."/>
            <person name="Zhao B."/>
            <person name="Teplitskaya E."/>
            <person name="Edwards J.R."/>
            <person name="Pampou S."/>
            <person name="Georghiou A."/>
            <person name="Chou I.-C."/>
            <person name="Iannuccilli W."/>
            <person name="Ulz M.E."/>
            <person name="Kim D.H."/>
            <person name="Geringer-Sameth A."/>
            <person name="Goldsberry C."/>
            <person name="Morozov P."/>
            <person name="Fischer S.G."/>
            <person name="Segal G."/>
            <person name="Qu X."/>
            <person name="Rzhetsky A."/>
            <person name="Zhang P."/>
            <person name="Cayanis E."/>
            <person name="De Jong P.J."/>
            <person name="Ju J."/>
            <person name="Kalachikov S."/>
            <person name="Shuman H.A."/>
            <person name="Russo J.J."/>
        </authorList>
    </citation>
    <scope>NUCLEOTIDE SEQUENCE [LARGE SCALE GENOMIC DNA]</scope>
    <source>
        <strain>Philadelphia 1 / ATCC 33152 / DSM 7513</strain>
    </source>
</reference>
<protein>
    <recommendedName>
        <fullName evidence="1">4-hydroxy-tetrahydrodipicolinate reductase</fullName>
        <shortName evidence="1">HTPA reductase</shortName>
        <ecNumber evidence="1">1.17.1.8</ecNumber>
    </recommendedName>
</protein>
<dbReference type="EC" id="1.17.1.8" evidence="1"/>
<dbReference type="EMBL" id="AE017354">
    <property type="protein sequence ID" value="AAU26238.1"/>
    <property type="molecule type" value="Genomic_DNA"/>
</dbReference>
<dbReference type="RefSeq" id="WP_010945892.1">
    <property type="nucleotide sequence ID" value="NC_002942.5"/>
</dbReference>
<dbReference type="RefSeq" id="YP_094185.1">
    <property type="nucleotide sequence ID" value="NC_002942.5"/>
</dbReference>
<dbReference type="SMR" id="Q5ZZ80"/>
<dbReference type="STRING" id="272624.lpg0131"/>
<dbReference type="PaxDb" id="272624-lpg0131"/>
<dbReference type="GeneID" id="57034139"/>
<dbReference type="KEGG" id="lpn:lpg0131"/>
<dbReference type="PATRIC" id="fig|272624.6.peg.138"/>
<dbReference type="eggNOG" id="COG0289">
    <property type="taxonomic scope" value="Bacteria"/>
</dbReference>
<dbReference type="HOGENOM" id="CLU_047479_0_1_6"/>
<dbReference type="OrthoDB" id="9790352at2"/>
<dbReference type="UniPathway" id="UPA00034">
    <property type="reaction ID" value="UER00018"/>
</dbReference>
<dbReference type="Proteomes" id="UP000000609">
    <property type="component" value="Chromosome"/>
</dbReference>
<dbReference type="GO" id="GO:0005829">
    <property type="term" value="C:cytosol"/>
    <property type="evidence" value="ECO:0007669"/>
    <property type="project" value="TreeGrafter"/>
</dbReference>
<dbReference type="GO" id="GO:0008839">
    <property type="term" value="F:4-hydroxy-tetrahydrodipicolinate reductase"/>
    <property type="evidence" value="ECO:0007669"/>
    <property type="project" value="UniProtKB-EC"/>
</dbReference>
<dbReference type="GO" id="GO:0051287">
    <property type="term" value="F:NAD binding"/>
    <property type="evidence" value="ECO:0007669"/>
    <property type="project" value="UniProtKB-UniRule"/>
</dbReference>
<dbReference type="GO" id="GO:0050661">
    <property type="term" value="F:NADP binding"/>
    <property type="evidence" value="ECO:0007669"/>
    <property type="project" value="UniProtKB-UniRule"/>
</dbReference>
<dbReference type="GO" id="GO:0016726">
    <property type="term" value="F:oxidoreductase activity, acting on CH or CH2 groups, NAD or NADP as acceptor"/>
    <property type="evidence" value="ECO:0007669"/>
    <property type="project" value="UniProtKB-UniRule"/>
</dbReference>
<dbReference type="GO" id="GO:0019877">
    <property type="term" value="P:diaminopimelate biosynthetic process"/>
    <property type="evidence" value="ECO:0007669"/>
    <property type="project" value="UniProtKB-UniRule"/>
</dbReference>
<dbReference type="GO" id="GO:0009089">
    <property type="term" value="P:lysine biosynthetic process via diaminopimelate"/>
    <property type="evidence" value="ECO:0007669"/>
    <property type="project" value="UniProtKB-UniRule"/>
</dbReference>
<dbReference type="CDD" id="cd02274">
    <property type="entry name" value="DHDPR_N"/>
    <property type="match status" value="1"/>
</dbReference>
<dbReference type="FunFam" id="3.30.360.10:FF:000009">
    <property type="entry name" value="4-hydroxy-tetrahydrodipicolinate reductase"/>
    <property type="match status" value="1"/>
</dbReference>
<dbReference type="Gene3D" id="3.30.360.10">
    <property type="entry name" value="Dihydrodipicolinate Reductase, domain 2"/>
    <property type="match status" value="1"/>
</dbReference>
<dbReference type="Gene3D" id="3.40.50.720">
    <property type="entry name" value="NAD(P)-binding Rossmann-like Domain"/>
    <property type="match status" value="1"/>
</dbReference>
<dbReference type="HAMAP" id="MF_00102">
    <property type="entry name" value="DapB"/>
    <property type="match status" value="1"/>
</dbReference>
<dbReference type="InterPro" id="IPR022663">
    <property type="entry name" value="DapB_C"/>
</dbReference>
<dbReference type="InterPro" id="IPR000846">
    <property type="entry name" value="DapB_N"/>
</dbReference>
<dbReference type="InterPro" id="IPR022664">
    <property type="entry name" value="DapB_N_CS"/>
</dbReference>
<dbReference type="InterPro" id="IPR023940">
    <property type="entry name" value="DHDPR_bac"/>
</dbReference>
<dbReference type="InterPro" id="IPR036291">
    <property type="entry name" value="NAD(P)-bd_dom_sf"/>
</dbReference>
<dbReference type="NCBIfam" id="TIGR00036">
    <property type="entry name" value="dapB"/>
    <property type="match status" value="1"/>
</dbReference>
<dbReference type="PANTHER" id="PTHR20836:SF0">
    <property type="entry name" value="4-HYDROXY-TETRAHYDRODIPICOLINATE REDUCTASE 1, CHLOROPLASTIC-RELATED"/>
    <property type="match status" value="1"/>
</dbReference>
<dbReference type="PANTHER" id="PTHR20836">
    <property type="entry name" value="DIHYDRODIPICOLINATE REDUCTASE"/>
    <property type="match status" value="1"/>
</dbReference>
<dbReference type="Pfam" id="PF05173">
    <property type="entry name" value="DapB_C"/>
    <property type="match status" value="1"/>
</dbReference>
<dbReference type="Pfam" id="PF01113">
    <property type="entry name" value="DapB_N"/>
    <property type="match status" value="1"/>
</dbReference>
<dbReference type="PIRSF" id="PIRSF000161">
    <property type="entry name" value="DHPR"/>
    <property type="match status" value="1"/>
</dbReference>
<dbReference type="SUPFAM" id="SSF55347">
    <property type="entry name" value="Glyceraldehyde-3-phosphate dehydrogenase-like, C-terminal domain"/>
    <property type="match status" value="1"/>
</dbReference>
<dbReference type="SUPFAM" id="SSF51735">
    <property type="entry name" value="NAD(P)-binding Rossmann-fold domains"/>
    <property type="match status" value="1"/>
</dbReference>
<dbReference type="PROSITE" id="PS01298">
    <property type="entry name" value="DAPB"/>
    <property type="match status" value="1"/>
</dbReference>
<accession>Q5ZZ80</accession>
<comment type="function">
    <text evidence="1">Catalyzes the conversion of 4-hydroxy-tetrahydrodipicolinate (HTPA) to tetrahydrodipicolinate.</text>
</comment>
<comment type="catalytic activity">
    <reaction evidence="1">
        <text>(S)-2,3,4,5-tetrahydrodipicolinate + NAD(+) + H2O = (2S,4S)-4-hydroxy-2,3,4,5-tetrahydrodipicolinate + NADH + H(+)</text>
        <dbReference type="Rhea" id="RHEA:35323"/>
        <dbReference type="ChEBI" id="CHEBI:15377"/>
        <dbReference type="ChEBI" id="CHEBI:15378"/>
        <dbReference type="ChEBI" id="CHEBI:16845"/>
        <dbReference type="ChEBI" id="CHEBI:57540"/>
        <dbReference type="ChEBI" id="CHEBI:57945"/>
        <dbReference type="ChEBI" id="CHEBI:67139"/>
        <dbReference type="EC" id="1.17.1.8"/>
    </reaction>
</comment>
<comment type="catalytic activity">
    <reaction evidence="1">
        <text>(S)-2,3,4,5-tetrahydrodipicolinate + NADP(+) + H2O = (2S,4S)-4-hydroxy-2,3,4,5-tetrahydrodipicolinate + NADPH + H(+)</text>
        <dbReference type="Rhea" id="RHEA:35331"/>
        <dbReference type="ChEBI" id="CHEBI:15377"/>
        <dbReference type="ChEBI" id="CHEBI:15378"/>
        <dbReference type="ChEBI" id="CHEBI:16845"/>
        <dbReference type="ChEBI" id="CHEBI:57783"/>
        <dbReference type="ChEBI" id="CHEBI:58349"/>
        <dbReference type="ChEBI" id="CHEBI:67139"/>
        <dbReference type="EC" id="1.17.1.8"/>
    </reaction>
</comment>
<comment type="pathway">
    <text evidence="1">Amino-acid biosynthesis; L-lysine biosynthesis via DAP pathway; (S)-tetrahydrodipicolinate from L-aspartate: step 4/4.</text>
</comment>
<comment type="subcellular location">
    <subcellularLocation>
        <location evidence="1">Cytoplasm</location>
    </subcellularLocation>
</comment>
<comment type="similarity">
    <text evidence="1">Belongs to the DapB family.</text>
</comment>
<comment type="caution">
    <text evidence="2">Was originally thought to be a dihydrodipicolinate reductase (DHDPR), catalyzing the conversion of dihydrodipicolinate to tetrahydrodipicolinate. However, it was shown in E.coli that the substrate of the enzymatic reaction is not dihydrodipicolinate (DHDP) but in fact (2S,4S)-4-hydroxy-2,3,4,5-tetrahydrodipicolinic acid (HTPA), the product released by the DapA-catalyzed reaction.</text>
</comment>
<evidence type="ECO:0000255" key="1">
    <source>
        <dbReference type="HAMAP-Rule" id="MF_00102"/>
    </source>
</evidence>
<evidence type="ECO:0000305" key="2"/>
<feature type="chain" id="PRO_0000228360" description="4-hydroxy-tetrahydrodipicolinate reductase">
    <location>
        <begin position="1"/>
        <end position="243"/>
    </location>
</feature>
<feature type="active site" description="Proton donor/acceptor" evidence="1">
    <location>
        <position position="134"/>
    </location>
</feature>
<feature type="active site" description="Proton donor" evidence="1">
    <location>
        <position position="138"/>
    </location>
</feature>
<feature type="binding site" evidence="1">
    <location>
        <begin position="9"/>
        <end position="14"/>
    </location>
    <ligand>
        <name>NAD(+)</name>
        <dbReference type="ChEBI" id="CHEBI:57540"/>
    </ligand>
</feature>
<feature type="binding site" evidence="1">
    <location>
        <begin position="78"/>
        <end position="80"/>
    </location>
    <ligand>
        <name>NAD(+)</name>
        <dbReference type="ChEBI" id="CHEBI:57540"/>
    </ligand>
</feature>
<feature type="binding site" evidence="1">
    <location>
        <begin position="104"/>
        <end position="107"/>
    </location>
    <ligand>
        <name>NAD(+)</name>
        <dbReference type="ChEBI" id="CHEBI:57540"/>
    </ligand>
</feature>
<feature type="binding site" evidence="1">
    <location>
        <position position="135"/>
    </location>
    <ligand>
        <name>(S)-2,3,4,5-tetrahydrodipicolinate</name>
        <dbReference type="ChEBI" id="CHEBI:16845"/>
    </ligand>
</feature>
<feature type="binding site" evidence="1">
    <location>
        <begin position="144"/>
        <end position="145"/>
    </location>
    <ligand>
        <name>(S)-2,3,4,5-tetrahydrodipicolinate</name>
        <dbReference type="ChEBI" id="CHEBI:16845"/>
    </ligand>
</feature>
<keyword id="KW-0028">Amino-acid biosynthesis</keyword>
<keyword id="KW-0963">Cytoplasm</keyword>
<keyword id="KW-0220">Diaminopimelate biosynthesis</keyword>
<keyword id="KW-0457">Lysine biosynthesis</keyword>
<keyword id="KW-0520">NAD</keyword>
<keyword id="KW-0521">NADP</keyword>
<keyword id="KW-0560">Oxidoreductase</keyword>
<keyword id="KW-1185">Reference proteome</keyword>
<organism>
    <name type="scientific">Legionella pneumophila subsp. pneumophila (strain Philadelphia 1 / ATCC 33152 / DSM 7513)</name>
    <dbReference type="NCBI Taxonomy" id="272624"/>
    <lineage>
        <taxon>Bacteria</taxon>
        <taxon>Pseudomonadati</taxon>
        <taxon>Pseudomonadota</taxon>
        <taxon>Gammaproteobacteria</taxon>
        <taxon>Legionellales</taxon>
        <taxon>Legionellaceae</taxon>
        <taxon>Legionella</taxon>
    </lineage>
</organism>